<comment type="function">
    <text evidence="1">Component of the NuA4 histone acetyltransferase complex which is involved in transcriptional activation of selected genes principally by acetylation of nucleosomal histone H4 and H2A. The NuA4 complex is also involved in DNA repair (By similarity).</text>
</comment>
<comment type="subunit">
    <text evidence="1">Component of the NuA4 histone acetyltransferase complex.</text>
</comment>
<comment type="subcellular location">
    <subcellularLocation>
        <location evidence="1">Nucleus</location>
    </subcellularLocation>
</comment>
<comment type="similarity">
    <text evidence="4">Belongs to the EAF6 family.</text>
</comment>
<feature type="chain" id="PRO_0000086894" description="Chromatin modification-related protein EAF6">
    <location>
        <begin position="1"/>
        <end position="211"/>
    </location>
</feature>
<feature type="region of interest" description="Disordered" evidence="3">
    <location>
        <begin position="1"/>
        <end position="64"/>
    </location>
</feature>
<feature type="region of interest" description="Disordered" evidence="3">
    <location>
        <begin position="152"/>
        <end position="211"/>
    </location>
</feature>
<feature type="coiled-coil region" evidence="2">
    <location>
        <begin position="61"/>
        <end position="90"/>
    </location>
</feature>
<feature type="compositionally biased region" description="Polar residues" evidence="3">
    <location>
        <begin position="9"/>
        <end position="33"/>
    </location>
</feature>
<feature type="compositionally biased region" description="Basic and acidic residues" evidence="3">
    <location>
        <begin position="35"/>
        <end position="49"/>
    </location>
</feature>
<feature type="compositionally biased region" description="Polar residues" evidence="3">
    <location>
        <begin position="174"/>
        <end position="185"/>
    </location>
</feature>
<feature type="compositionally biased region" description="Basic residues" evidence="3">
    <location>
        <begin position="201"/>
        <end position="211"/>
    </location>
</feature>
<gene>
    <name type="primary">EAF6</name>
    <name type="ordered locus">CAALFM_C108510WA</name>
    <name type="ORF">CaO19.396</name>
    <name type="ORF">CaO19.8026</name>
</gene>
<dbReference type="EMBL" id="CP017623">
    <property type="protein sequence ID" value="AOW26489.1"/>
    <property type="molecule type" value="Genomic_DNA"/>
</dbReference>
<dbReference type="RefSeq" id="XP_711884.1">
    <property type="nucleotide sequence ID" value="XM_706791.2"/>
</dbReference>
<dbReference type="SMR" id="Q59QC2"/>
<dbReference type="STRING" id="237561.Q59QC2"/>
<dbReference type="EnsemblFungi" id="C1_08510W_A-T">
    <property type="protein sequence ID" value="C1_08510W_A-T-p1"/>
    <property type="gene ID" value="C1_08510W_A"/>
</dbReference>
<dbReference type="GeneID" id="3646494"/>
<dbReference type="KEGG" id="cal:CAALFM_C108510WA"/>
<dbReference type="CGD" id="CAL0000192577">
    <property type="gene designation" value="EAF6"/>
</dbReference>
<dbReference type="VEuPathDB" id="FungiDB:C1_08510W_A"/>
<dbReference type="eggNOG" id="ENOG502SEZK">
    <property type="taxonomic scope" value="Eukaryota"/>
</dbReference>
<dbReference type="HOGENOM" id="CLU_093901_0_0_1"/>
<dbReference type="InParanoid" id="Q59QC2"/>
<dbReference type="OMA" id="GPMEQNR"/>
<dbReference type="OrthoDB" id="440324at2759"/>
<dbReference type="PRO" id="PR:Q59QC2"/>
<dbReference type="Proteomes" id="UP000000559">
    <property type="component" value="Chromosome 1"/>
</dbReference>
<dbReference type="GO" id="GO:0035267">
    <property type="term" value="C:NuA4 histone acetyltransferase complex"/>
    <property type="evidence" value="ECO:0000314"/>
    <property type="project" value="CGD"/>
</dbReference>
<dbReference type="GO" id="GO:0005634">
    <property type="term" value="C:nucleus"/>
    <property type="evidence" value="ECO:0007669"/>
    <property type="project" value="UniProtKB-SubCell"/>
</dbReference>
<dbReference type="GO" id="GO:0006338">
    <property type="term" value="P:chromatin remodeling"/>
    <property type="evidence" value="ECO:0007669"/>
    <property type="project" value="GOC"/>
</dbReference>
<dbReference type="GO" id="GO:0006281">
    <property type="term" value="P:DNA repair"/>
    <property type="evidence" value="ECO:0007669"/>
    <property type="project" value="UniProtKB-KW"/>
</dbReference>
<dbReference type="InterPro" id="IPR015418">
    <property type="entry name" value="Eaf6"/>
</dbReference>
<dbReference type="PANTHER" id="PTHR13476">
    <property type="entry name" value="CHROMATIN MODIFICATION-RELATED PROTEIN MEAF6"/>
    <property type="match status" value="1"/>
</dbReference>
<dbReference type="Pfam" id="PF09340">
    <property type="entry name" value="NuA4"/>
    <property type="match status" value="1"/>
</dbReference>
<accession>Q59QC2</accession>
<accession>A0A1D8PEC4</accession>
<evidence type="ECO:0000250" key="1"/>
<evidence type="ECO:0000255" key="2"/>
<evidence type="ECO:0000256" key="3">
    <source>
        <dbReference type="SAM" id="MobiDB-lite"/>
    </source>
</evidence>
<evidence type="ECO:0000305" key="4"/>
<proteinExistence type="inferred from homology"/>
<reference key="1">
    <citation type="journal article" date="2004" name="Proc. Natl. Acad. Sci. U.S.A.">
        <title>The diploid genome sequence of Candida albicans.</title>
        <authorList>
            <person name="Jones T."/>
            <person name="Federspiel N.A."/>
            <person name="Chibana H."/>
            <person name="Dungan J."/>
            <person name="Kalman S."/>
            <person name="Magee B.B."/>
            <person name="Newport G."/>
            <person name="Thorstenson Y.R."/>
            <person name="Agabian N."/>
            <person name="Magee P.T."/>
            <person name="Davis R.W."/>
            <person name="Scherer S."/>
        </authorList>
    </citation>
    <scope>NUCLEOTIDE SEQUENCE [LARGE SCALE GENOMIC DNA]</scope>
    <source>
        <strain>SC5314 / ATCC MYA-2876</strain>
    </source>
</reference>
<reference key="2">
    <citation type="journal article" date="2007" name="Genome Biol.">
        <title>Assembly of the Candida albicans genome into sixteen supercontigs aligned on the eight chromosomes.</title>
        <authorList>
            <person name="van het Hoog M."/>
            <person name="Rast T.J."/>
            <person name="Martchenko M."/>
            <person name="Grindle S."/>
            <person name="Dignard D."/>
            <person name="Hogues H."/>
            <person name="Cuomo C."/>
            <person name="Berriman M."/>
            <person name="Scherer S."/>
            <person name="Magee B.B."/>
            <person name="Whiteway M."/>
            <person name="Chibana H."/>
            <person name="Nantel A."/>
            <person name="Magee P.T."/>
        </authorList>
    </citation>
    <scope>GENOME REANNOTATION</scope>
    <source>
        <strain>SC5314 / ATCC MYA-2876</strain>
    </source>
</reference>
<reference key="3">
    <citation type="journal article" date="2013" name="Genome Biol.">
        <title>Assembly of a phased diploid Candida albicans genome facilitates allele-specific measurements and provides a simple model for repeat and indel structure.</title>
        <authorList>
            <person name="Muzzey D."/>
            <person name="Schwartz K."/>
            <person name="Weissman J.S."/>
            <person name="Sherlock G."/>
        </authorList>
    </citation>
    <scope>NUCLEOTIDE SEQUENCE [LARGE SCALE GENOMIC DNA]</scope>
    <scope>GENOME REANNOTATION</scope>
    <source>
        <strain>SC5314 / ATCC MYA-2876</strain>
    </source>
</reference>
<name>EAF6_CANAL</name>
<organism>
    <name type="scientific">Candida albicans (strain SC5314 / ATCC MYA-2876)</name>
    <name type="common">Yeast</name>
    <dbReference type="NCBI Taxonomy" id="237561"/>
    <lineage>
        <taxon>Eukaryota</taxon>
        <taxon>Fungi</taxon>
        <taxon>Dikarya</taxon>
        <taxon>Ascomycota</taxon>
        <taxon>Saccharomycotina</taxon>
        <taxon>Pichiomycetes</taxon>
        <taxon>Debaryomycetaceae</taxon>
        <taxon>Candida/Lodderomyces clade</taxon>
        <taxon>Candida</taxon>
    </lineage>
</organism>
<keyword id="KW-0156">Chromatin regulator</keyword>
<keyword id="KW-0175">Coiled coil</keyword>
<keyword id="KW-0227">DNA damage</keyword>
<keyword id="KW-0234">DNA repair</keyword>
<keyword id="KW-0539">Nucleus</keyword>
<keyword id="KW-1185">Reference proteome</keyword>
<keyword id="KW-0804">Transcription</keyword>
<keyword id="KW-0805">Transcription regulation</keyword>
<protein>
    <recommendedName>
        <fullName>Chromatin modification-related protein EAF6</fullName>
    </recommendedName>
</protein>
<sequence length="211" mass="23209">MSTKDTNDVKPTSSKSNEISSSGTATPKKTSSVPAKEDRKDTTKKDIANERTSSSKSKDDSEKYVELKNKLIQQILKKQELTRKLTTLEDSIYQKEIDYFEESPLGNIVKGFENFSKTSGGGGANKRKIVYSEDDHIFSLSSVNYIKSLMKRQGHTSNGGSSKDDFDDYEDSVDPTTASAGSKANSIEKNETPSGSSGTPSRKRKARVLED</sequence>